<sequence>MLKCFIILTLYKHYTFVIQILTLLGTIKNHENFNLHVTGQCLKKSTLNLLKFLFVELEYIYLAHICFLKASVGF</sequence>
<name>YPCD_STAAU</name>
<comment type="miscellaneous">
    <text>PC194 is a plasmid that specifies inducible chloramphenicol resistance.</text>
</comment>
<comment type="sequence caution" evidence="1">
    <conflict type="erroneous initiation">
        <sequence resource="EMBL-CDS" id="CAA24587"/>
    </conflict>
</comment>
<proteinExistence type="predicted"/>
<evidence type="ECO:0000305" key="1"/>
<reference key="1">
    <citation type="journal article" date="1982" name="J. Bacteriol.">
        <title>Nucleotide sequence and functional map of pC194, a plasmid that specifies inducible chloramphenicol resistance.</title>
        <authorList>
            <person name="Horinouchi S."/>
            <person name="Weisblum B."/>
        </authorList>
    </citation>
    <scope>NUCLEOTIDE SEQUENCE [GENOMIC DNA]</scope>
</reference>
<organism>
    <name type="scientific">Staphylococcus aureus</name>
    <dbReference type="NCBI Taxonomy" id="1280"/>
    <lineage>
        <taxon>Bacteria</taxon>
        <taxon>Bacillati</taxon>
        <taxon>Bacillota</taxon>
        <taxon>Bacilli</taxon>
        <taxon>Bacillales</taxon>
        <taxon>Staphylococcaceae</taxon>
        <taxon>Staphylococcus</taxon>
    </lineage>
</organism>
<keyword id="KW-0614">Plasmid</keyword>
<protein>
    <recommendedName>
        <fullName>Uncharacterized 8.7 kDa protein</fullName>
    </recommendedName>
    <alternativeName>
        <fullName>Reading frame D</fullName>
    </alternativeName>
</protein>
<geneLocation type="plasmid">
    <name>pC194</name>
</geneLocation>
<dbReference type="EMBL" id="V01277">
    <property type="protein sequence ID" value="CAA24587.1"/>
    <property type="status" value="ALT_INIT"/>
    <property type="molecule type" value="Genomic_DNA"/>
</dbReference>
<dbReference type="PIR" id="A04489">
    <property type="entry name" value="QQSA7C"/>
</dbReference>
<dbReference type="RefSeq" id="NP_040438.3">
    <property type="nucleotide sequence ID" value="NC_002013.1"/>
</dbReference>
<dbReference type="RefSeq" id="YP_006937526.1">
    <property type="nucleotide sequence ID" value="NC_013314.1"/>
</dbReference>
<dbReference type="SMR" id="P03860"/>
<accession>P03860</accession>
<feature type="chain" id="PRO_0000068519" description="Uncharacterized 8.7 kDa protein">
    <location>
        <begin position="1"/>
        <end position="74"/>
    </location>
</feature>